<sequence>MGNEFRVCDDCQATNVKTLVPKLKKVDSCATIEVGCQSYCGPGRKKSFAFVNNRPVAAPTEDELIVKIEAKLNK</sequence>
<evidence type="ECO:0000255" key="1">
    <source>
        <dbReference type="HAMAP-Rule" id="MF_01863"/>
    </source>
</evidence>
<name>Y5507_BACC4</name>
<accession>B7HG46</accession>
<proteinExistence type="inferred from homology"/>
<reference key="1">
    <citation type="submission" date="2008-10" db="EMBL/GenBank/DDBJ databases">
        <title>Genome sequence of Bacillus cereus B4264.</title>
        <authorList>
            <person name="Dodson R.J."/>
            <person name="Durkin A.S."/>
            <person name="Rosovitz M.J."/>
            <person name="Rasko D.A."/>
            <person name="Hoffmaster A."/>
            <person name="Ravel J."/>
            <person name="Sutton G."/>
        </authorList>
    </citation>
    <scope>NUCLEOTIDE SEQUENCE [LARGE SCALE GENOMIC DNA]</scope>
    <source>
        <strain>B4264</strain>
    </source>
</reference>
<protein>
    <recommendedName>
        <fullName evidence="1">UPF0741 protein BCB4264_A5507</fullName>
    </recommendedName>
</protein>
<feature type="chain" id="PRO_0000372730" description="UPF0741 protein BCB4264_A5507">
    <location>
        <begin position="1"/>
        <end position="74"/>
    </location>
</feature>
<comment type="similarity">
    <text evidence="1">Belongs to the UPF0741 family.</text>
</comment>
<gene>
    <name type="ordered locus">BCB4264_A5507</name>
</gene>
<dbReference type="EMBL" id="CP001176">
    <property type="protein sequence ID" value="ACK59956.1"/>
    <property type="molecule type" value="Genomic_DNA"/>
</dbReference>
<dbReference type="RefSeq" id="WP_000526079.1">
    <property type="nucleotide sequence ID" value="NZ_VEHB01000004.1"/>
</dbReference>
<dbReference type="SMR" id="B7HG46"/>
<dbReference type="KEGG" id="bcb:BCB4264_A5507"/>
<dbReference type="HOGENOM" id="CLU_163820_1_0_9"/>
<dbReference type="Proteomes" id="UP000007096">
    <property type="component" value="Chromosome"/>
</dbReference>
<dbReference type="HAMAP" id="MF_01863">
    <property type="entry name" value="UPF0741"/>
    <property type="match status" value="1"/>
</dbReference>
<dbReference type="InterPro" id="IPR009910">
    <property type="entry name" value="DUF1450"/>
</dbReference>
<dbReference type="InterPro" id="IPR020880">
    <property type="entry name" value="UPF0741"/>
</dbReference>
<dbReference type="Pfam" id="PF07293">
    <property type="entry name" value="DUF1450"/>
    <property type="match status" value="1"/>
</dbReference>
<organism>
    <name type="scientific">Bacillus cereus (strain B4264)</name>
    <dbReference type="NCBI Taxonomy" id="405532"/>
    <lineage>
        <taxon>Bacteria</taxon>
        <taxon>Bacillati</taxon>
        <taxon>Bacillota</taxon>
        <taxon>Bacilli</taxon>
        <taxon>Bacillales</taxon>
        <taxon>Bacillaceae</taxon>
        <taxon>Bacillus</taxon>
        <taxon>Bacillus cereus group</taxon>
    </lineage>
</organism>